<protein>
    <recommendedName>
        <fullName>NAD(P)H-quinone oxidoreductase subunit 5, chloroplastic</fullName>
        <ecNumber>7.1.1.-</ecNumber>
    </recommendedName>
    <alternativeName>
        <fullName>NAD(P)H dehydrogenase subunit 5</fullName>
    </alternativeName>
    <alternativeName>
        <fullName>NADH-plastoquinone oxidoreductase subunit 5</fullName>
    </alternativeName>
</protein>
<comment type="function">
    <text evidence="1">NDH shuttles electrons from NAD(P)H:plastoquinone, via FMN and iron-sulfur (Fe-S) centers, to quinones in the photosynthetic chain and possibly in a chloroplast respiratory chain. The immediate electron acceptor for the enzyme in this species is believed to be plastoquinone. Couples the redox reaction to proton translocation, and thus conserves the redox energy in a proton gradient (By similarity).</text>
</comment>
<comment type="catalytic activity">
    <reaction>
        <text>a plastoquinone + NADH + (n+1) H(+)(in) = a plastoquinol + NAD(+) + n H(+)(out)</text>
        <dbReference type="Rhea" id="RHEA:42608"/>
        <dbReference type="Rhea" id="RHEA-COMP:9561"/>
        <dbReference type="Rhea" id="RHEA-COMP:9562"/>
        <dbReference type="ChEBI" id="CHEBI:15378"/>
        <dbReference type="ChEBI" id="CHEBI:17757"/>
        <dbReference type="ChEBI" id="CHEBI:57540"/>
        <dbReference type="ChEBI" id="CHEBI:57945"/>
        <dbReference type="ChEBI" id="CHEBI:62192"/>
    </reaction>
</comment>
<comment type="catalytic activity">
    <reaction>
        <text>a plastoquinone + NADPH + (n+1) H(+)(in) = a plastoquinol + NADP(+) + n H(+)(out)</text>
        <dbReference type="Rhea" id="RHEA:42612"/>
        <dbReference type="Rhea" id="RHEA-COMP:9561"/>
        <dbReference type="Rhea" id="RHEA-COMP:9562"/>
        <dbReference type="ChEBI" id="CHEBI:15378"/>
        <dbReference type="ChEBI" id="CHEBI:17757"/>
        <dbReference type="ChEBI" id="CHEBI:57783"/>
        <dbReference type="ChEBI" id="CHEBI:58349"/>
        <dbReference type="ChEBI" id="CHEBI:62192"/>
    </reaction>
</comment>
<comment type="subunit">
    <text evidence="1">NDH is composed of at least 16 different subunits, 5 of which are encoded in the nucleus.</text>
</comment>
<comment type="subcellular location">
    <subcellularLocation>
        <location evidence="1">Plastid</location>
        <location evidence="1">Chloroplast thylakoid membrane</location>
        <topology evidence="1">Multi-pass membrane protein</topology>
    </subcellularLocation>
</comment>
<comment type="similarity">
    <text evidence="3">Belongs to the complex I subunit 5 family.</text>
</comment>
<organism>
    <name type="scientific">Buxus microphylla</name>
    <name type="common">Littleleaf boxwood</name>
    <name type="synonym">Japanese boxwood</name>
    <dbReference type="NCBI Taxonomy" id="153571"/>
    <lineage>
        <taxon>Eukaryota</taxon>
        <taxon>Viridiplantae</taxon>
        <taxon>Streptophyta</taxon>
        <taxon>Embryophyta</taxon>
        <taxon>Tracheophyta</taxon>
        <taxon>Spermatophyta</taxon>
        <taxon>Magnoliopsida</taxon>
        <taxon>Buxales</taxon>
        <taxon>Buxaceae</taxon>
        <taxon>Buxus</taxon>
    </lineage>
</organism>
<proteinExistence type="inferred from homology"/>
<evidence type="ECO:0000250" key="1"/>
<evidence type="ECO:0000255" key="2"/>
<evidence type="ECO:0000305" key="3"/>
<name>NU5C_BUXMI</name>
<keyword id="KW-0150">Chloroplast</keyword>
<keyword id="KW-0472">Membrane</keyword>
<keyword id="KW-0520">NAD</keyword>
<keyword id="KW-0521">NADP</keyword>
<keyword id="KW-0934">Plastid</keyword>
<keyword id="KW-0618">Plastoquinone</keyword>
<keyword id="KW-0874">Quinone</keyword>
<keyword id="KW-0793">Thylakoid</keyword>
<keyword id="KW-1278">Translocase</keyword>
<keyword id="KW-0812">Transmembrane</keyword>
<keyword id="KW-1133">Transmembrane helix</keyword>
<keyword id="KW-0813">Transport</keyword>
<geneLocation type="chloroplast"/>
<sequence length="739" mass="83572">MEHTYQYTLIIPFALLPVPMLIGVALIFFPTATKNVRRMWAFPSVLLLSIVMIFSFNLSIQQINGSSIYQYVCSWTINNDFSFEFGLLIDSLTSIMLILITTVGILVLIYSDNYMSHDQGYLRFFAYMSFSNISMLGLVTSSNLIQIHIFWELVGVCSYLLIGFWFTRPIAANACQKAFVTNRVGDFGLLLGILGFYWITGSFEFRDLFEIFNNLIYNNQVNSLFVILCASLLFVGAVAKSAQFPLHVWLPDAMEGPTPISALIHAATMVAAGIFLVARLLPLFTVIPYIMNIISLIGIITILLGATLALTQKDIKRSLAYSTMSQLGYIMLALGMGSYRAALFHLITHAYSKALLFLGSGSIIHSMESIVGYSPDKSQNMILMGGLKKYVPITKTAFFLGTLSLCGIPPLACFWSKDEIINDSWLYSPIFAIIACSTAGLTAFYMFRTYLLTFEGHLNVNLKNYSGKKTSSFYSICLWGKEGSKTIKKNYCLSTINNNEGDSFFSKNTYPMDGNVRNMTRPFITITHFDNKETFSYPHESDNNMLFPLLVLVLFTFFVGSIGIPFDQGRMDLDILSKWLTPSINLLHTNSNNSFDWYEFVKNSIFSVSIAYFGIFISSFLYRPIYSSLQNLELINSFVKMGPKRSLWDKIINVIYNWSYNRGYIDFFYSIALTRSIRVISELTHFFDRRVIDGITNGVGVTSFFVGEGVRYVGSGRISSYLFLYLFSVSIFFLIFQVL</sequence>
<gene>
    <name type="primary">ndhF</name>
</gene>
<dbReference type="EC" id="7.1.1.-"/>
<dbReference type="EMBL" id="EF380351">
    <property type="protein sequence ID" value="ABQ45297.1"/>
    <property type="molecule type" value="Genomic_DNA"/>
</dbReference>
<dbReference type="RefSeq" id="YP_001294232.1">
    <property type="nucleotide sequence ID" value="NC_009599.1"/>
</dbReference>
<dbReference type="SMR" id="A6MM84"/>
<dbReference type="GeneID" id="5236821"/>
<dbReference type="GO" id="GO:0009535">
    <property type="term" value="C:chloroplast thylakoid membrane"/>
    <property type="evidence" value="ECO:0007669"/>
    <property type="project" value="UniProtKB-SubCell"/>
</dbReference>
<dbReference type="GO" id="GO:0008137">
    <property type="term" value="F:NADH dehydrogenase (ubiquinone) activity"/>
    <property type="evidence" value="ECO:0007669"/>
    <property type="project" value="InterPro"/>
</dbReference>
<dbReference type="GO" id="GO:0048038">
    <property type="term" value="F:quinone binding"/>
    <property type="evidence" value="ECO:0007669"/>
    <property type="project" value="UniProtKB-KW"/>
</dbReference>
<dbReference type="GO" id="GO:0042773">
    <property type="term" value="P:ATP synthesis coupled electron transport"/>
    <property type="evidence" value="ECO:0007669"/>
    <property type="project" value="InterPro"/>
</dbReference>
<dbReference type="GO" id="GO:0015990">
    <property type="term" value="P:electron transport coupled proton transport"/>
    <property type="evidence" value="ECO:0007669"/>
    <property type="project" value="TreeGrafter"/>
</dbReference>
<dbReference type="Gene3D" id="1.20.5.2700">
    <property type="match status" value="1"/>
</dbReference>
<dbReference type="InterPro" id="IPR002128">
    <property type="entry name" value="NADH_UbQ_OxRdtase_chlpt_su5_C"/>
</dbReference>
<dbReference type="InterPro" id="IPR018393">
    <property type="entry name" value="NADHpl_OxRdtase_5_subgr"/>
</dbReference>
<dbReference type="InterPro" id="IPR001750">
    <property type="entry name" value="ND/Mrp_TM"/>
</dbReference>
<dbReference type="InterPro" id="IPR003945">
    <property type="entry name" value="NU5C-like"/>
</dbReference>
<dbReference type="InterPro" id="IPR001516">
    <property type="entry name" value="Proton_antipo_N"/>
</dbReference>
<dbReference type="NCBIfam" id="TIGR01974">
    <property type="entry name" value="NDH_I_L"/>
    <property type="match status" value="1"/>
</dbReference>
<dbReference type="NCBIfam" id="NF005141">
    <property type="entry name" value="PRK06590.1"/>
    <property type="match status" value="1"/>
</dbReference>
<dbReference type="PANTHER" id="PTHR42829">
    <property type="entry name" value="NADH-UBIQUINONE OXIDOREDUCTASE CHAIN 5"/>
    <property type="match status" value="1"/>
</dbReference>
<dbReference type="PANTHER" id="PTHR42829:SF2">
    <property type="entry name" value="NADH-UBIQUINONE OXIDOREDUCTASE CHAIN 5"/>
    <property type="match status" value="1"/>
</dbReference>
<dbReference type="Pfam" id="PF01010">
    <property type="entry name" value="Proton_antipo_C"/>
    <property type="match status" value="1"/>
</dbReference>
<dbReference type="Pfam" id="PF00361">
    <property type="entry name" value="Proton_antipo_M"/>
    <property type="match status" value="1"/>
</dbReference>
<dbReference type="Pfam" id="PF00662">
    <property type="entry name" value="Proton_antipo_N"/>
    <property type="match status" value="1"/>
</dbReference>
<dbReference type="PRINTS" id="PR01434">
    <property type="entry name" value="NADHDHGNASE5"/>
</dbReference>
<dbReference type="PRINTS" id="PR01435">
    <property type="entry name" value="NPOXDRDTASE5"/>
</dbReference>
<accession>A6MM84</accession>
<feature type="chain" id="PRO_0000360914" description="NAD(P)H-quinone oxidoreductase subunit 5, chloroplastic">
    <location>
        <begin position="1"/>
        <end position="739"/>
    </location>
</feature>
<feature type="transmembrane region" description="Helical" evidence="2">
    <location>
        <begin position="9"/>
        <end position="29"/>
    </location>
</feature>
<feature type="transmembrane region" description="Helical" evidence="2">
    <location>
        <begin position="40"/>
        <end position="60"/>
    </location>
</feature>
<feature type="transmembrane region" description="Helical" evidence="2">
    <location>
        <begin position="89"/>
        <end position="109"/>
    </location>
</feature>
<feature type="transmembrane region" description="Helical" evidence="2">
    <location>
        <begin position="125"/>
        <end position="145"/>
    </location>
</feature>
<feature type="transmembrane region" description="Helical" evidence="2">
    <location>
        <begin position="147"/>
        <end position="167"/>
    </location>
</feature>
<feature type="transmembrane region" description="Helical" evidence="2">
    <location>
        <begin position="185"/>
        <end position="205"/>
    </location>
</feature>
<feature type="transmembrane region" description="Helical" evidence="2">
    <location>
        <begin position="224"/>
        <end position="244"/>
    </location>
</feature>
<feature type="transmembrane region" description="Helical" evidence="2">
    <location>
        <begin position="258"/>
        <end position="278"/>
    </location>
</feature>
<feature type="transmembrane region" description="Helical" evidence="2">
    <location>
        <begin position="283"/>
        <end position="303"/>
    </location>
</feature>
<feature type="transmembrane region" description="Helical" evidence="2">
    <location>
        <begin position="327"/>
        <end position="347"/>
    </location>
</feature>
<feature type="transmembrane region" description="Helical" evidence="2">
    <location>
        <begin position="354"/>
        <end position="374"/>
    </location>
</feature>
<feature type="transmembrane region" description="Helical" evidence="2">
    <location>
        <begin position="396"/>
        <end position="416"/>
    </location>
</feature>
<feature type="transmembrane region" description="Helical" evidence="2">
    <location>
        <begin position="425"/>
        <end position="445"/>
    </location>
</feature>
<feature type="transmembrane region" description="Helical" evidence="2">
    <location>
        <begin position="546"/>
        <end position="566"/>
    </location>
</feature>
<feature type="transmembrane region" description="Helical" evidence="2">
    <location>
        <begin position="605"/>
        <end position="625"/>
    </location>
</feature>
<feature type="transmembrane region" description="Helical" evidence="2">
    <location>
        <begin position="718"/>
        <end position="738"/>
    </location>
</feature>
<reference key="1">
    <citation type="journal article" date="2007" name="Mol. Phylogenet. Evol.">
        <title>Phylogenetic and evolutionary implications of complete chloroplast genome sequences of four early-diverging angiosperms: Buxus (Buxaceae), Chloranthus (Chloranthaceae), Dioscorea (Dioscoreaceae), and Illicium (Schisandraceae).</title>
        <authorList>
            <person name="Hansen D.R."/>
            <person name="Dastidar S.G."/>
            <person name="Cai Z."/>
            <person name="Penaflor C."/>
            <person name="Kuehl J.V."/>
            <person name="Boore J.L."/>
            <person name="Jansen R.K."/>
        </authorList>
    </citation>
    <scope>NUCLEOTIDE SEQUENCE [LARGE SCALE GENOMIC DNA]</scope>
</reference>